<organism>
    <name type="scientific">Pseudomonas putida (strain ATCC 700007 / DSM 6899 / JCM 31910 / BCRC 17059 / LMG 24140 / F1)</name>
    <dbReference type="NCBI Taxonomy" id="351746"/>
    <lineage>
        <taxon>Bacteria</taxon>
        <taxon>Pseudomonadati</taxon>
        <taxon>Pseudomonadota</taxon>
        <taxon>Gammaproteobacteria</taxon>
        <taxon>Pseudomonadales</taxon>
        <taxon>Pseudomonadaceae</taxon>
        <taxon>Pseudomonas</taxon>
    </lineage>
</organism>
<comment type="function">
    <text evidence="1">Cell wall formation. Catalyzes the transfer of a GlcNAc subunit on undecaprenyl-pyrophosphoryl-MurNAc-pentapeptide (lipid intermediate I) to form undecaprenyl-pyrophosphoryl-MurNAc-(pentapeptide)GlcNAc (lipid intermediate II).</text>
</comment>
<comment type="catalytic activity">
    <reaction evidence="1">
        <text>di-trans,octa-cis-undecaprenyl diphospho-N-acetyl-alpha-D-muramoyl-L-alanyl-D-glutamyl-meso-2,6-diaminopimeloyl-D-alanyl-D-alanine + UDP-N-acetyl-alpha-D-glucosamine = di-trans,octa-cis-undecaprenyl diphospho-[N-acetyl-alpha-D-glucosaminyl-(1-&gt;4)]-N-acetyl-alpha-D-muramoyl-L-alanyl-D-glutamyl-meso-2,6-diaminopimeloyl-D-alanyl-D-alanine + UDP + H(+)</text>
        <dbReference type="Rhea" id="RHEA:31227"/>
        <dbReference type="ChEBI" id="CHEBI:15378"/>
        <dbReference type="ChEBI" id="CHEBI:57705"/>
        <dbReference type="ChEBI" id="CHEBI:58223"/>
        <dbReference type="ChEBI" id="CHEBI:61387"/>
        <dbReference type="ChEBI" id="CHEBI:61388"/>
        <dbReference type="EC" id="2.4.1.227"/>
    </reaction>
</comment>
<comment type="pathway">
    <text evidence="1">Cell wall biogenesis; peptidoglycan biosynthesis.</text>
</comment>
<comment type="subcellular location">
    <subcellularLocation>
        <location evidence="1">Cell inner membrane</location>
        <topology evidence="1">Peripheral membrane protein</topology>
        <orientation evidence="1">Cytoplasmic side</orientation>
    </subcellularLocation>
</comment>
<comment type="similarity">
    <text evidence="1">Belongs to the glycosyltransferase 28 family. MurG subfamily.</text>
</comment>
<keyword id="KW-0131">Cell cycle</keyword>
<keyword id="KW-0132">Cell division</keyword>
<keyword id="KW-0997">Cell inner membrane</keyword>
<keyword id="KW-1003">Cell membrane</keyword>
<keyword id="KW-0133">Cell shape</keyword>
<keyword id="KW-0961">Cell wall biogenesis/degradation</keyword>
<keyword id="KW-0328">Glycosyltransferase</keyword>
<keyword id="KW-0472">Membrane</keyword>
<keyword id="KW-0573">Peptidoglycan synthesis</keyword>
<keyword id="KW-0808">Transferase</keyword>
<proteinExistence type="inferred from homology"/>
<reference key="1">
    <citation type="submission" date="2007-05" db="EMBL/GenBank/DDBJ databases">
        <title>Complete sequence of Pseudomonas putida F1.</title>
        <authorList>
            <consortium name="US DOE Joint Genome Institute"/>
            <person name="Copeland A."/>
            <person name="Lucas S."/>
            <person name="Lapidus A."/>
            <person name="Barry K."/>
            <person name="Detter J.C."/>
            <person name="Glavina del Rio T."/>
            <person name="Hammon N."/>
            <person name="Israni S."/>
            <person name="Dalin E."/>
            <person name="Tice H."/>
            <person name="Pitluck S."/>
            <person name="Chain P."/>
            <person name="Malfatti S."/>
            <person name="Shin M."/>
            <person name="Vergez L."/>
            <person name="Schmutz J."/>
            <person name="Larimer F."/>
            <person name="Land M."/>
            <person name="Hauser L."/>
            <person name="Kyrpides N."/>
            <person name="Lykidis A."/>
            <person name="Parales R."/>
            <person name="Richardson P."/>
        </authorList>
    </citation>
    <scope>NUCLEOTIDE SEQUENCE [LARGE SCALE GENOMIC DNA]</scope>
    <source>
        <strain>ATCC 700007 / DSM 6899 / JCM 31910 / BCRC 17059 / LMG 24140 / F1</strain>
    </source>
</reference>
<gene>
    <name evidence="1" type="primary">murG</name>
    <name type="ordered locus">Pput_4387</name>
</gene>
<evidence type="ECO:0000255" key="1">
    <source>
        <dbReference type="HAMAP-Rule" id="MF_00033"/>
    </source>
</evidence>
<protein>
    <recommendedName>
        <fullName evidence="1">UDP-N-acetylglucosamine--N-acetylmuramyl-(pentapeptide) pyrophosphoryl-undecaprenol N-acetylglucosamine transferase</fullName>
        <ecNumber evidence="1">2.4.1.227</ecNumber>
    </recommendedName>
    <alternativeName>
        <fullName evidence="1">Undecaprenyl-PP-MurNAc-pentapeptide-UDPGlcNAc GlcNAc transferase</fullName>
    </alternativeName>
</protein>
<sequence length="359" mass="38255">MAAEGKNVLIMAGGTGGHVFPALACAREFQKRGYSVHWLGTPRGIENELVPQAGLPLHLIQVSGLRGKGKLSLLKAPFTLVKAVLQARRIIRQLKPVCVLGFGGYVTGPGGVAARLCGVPLVIHEQNARAGTANRLLVPLSARVCEAFPNTFEASDKRRTTGNPVRPELFMDAQRVPLGERRARLLVLGGSLGAEPLNKLLPKALSEVPAALRPEVFHQAGKQHAPITAERYHEVGVEAQVEPFINDMAQAYGWADLVVCRAGALTVSELAAAGLPSMLVPLPHAIDDHQTHNAQYLAREGAAFLMPQATTGAAQLAERLNEVLMQPEKLNVMAGTARRLAKPAATSTVVDICLEVAHG</sequence>
<feature type="chain" id="PRO_1000057253" description="UDP-N-acetylglucosamine--N-acetylmuramyl-(pentapeptide) pyrophosphoryl-undecaprenol N-acetylglucosamine transferase">
    <location>
        <begin position="1"/>
        <end position="359"/>
    </location>
</feature>
<feature type="binding site" evidence="1">
    <location>
        <begin position="15"/>
        <end position="17"/>
    </location>
    <ligand>
        <name>UDP-N-acetyl-alpha-D-glucosamine</name>
        <dbReference type="ChEBI" id="CHEBI:57705"/>
    </ligand>
</feature>
<feature type="binding site" evidence="1">
    <location>
        <position position="127"/>
    </location>
    <ligand>
        <name>UDP-N-acetyl-alpha-D-glucosamine</name>
        <dbReference type="ChEBI" id="CHEBI:57705"/>
    </ligand>
</feature>
<feature type="binding site" evidence="1">
    <location>
        <position position="166"/>
    </location>
    <ligand>
        <name>UDP-N-acetyl-alpha-D-glucosamine</name>
        <dbReference type="ChEBI" id="CHEBI:57705"/>
    </ligand>
</feature>
<feature type="binding site" evidence="1">
    <location>
        <position position="191"/>
    </location>
    <ligand>
        <name>UDP-N-acetyl-alpha-D-glucosamine</name>
        <dbReference type="ChEBI" id="CHEBI:57705"/>
    </ligand>
</feature>
<feature type="binding site" evidence="1">
    <location>
        <position position="245"/>
    </location>
    <ligand>
        <name>UDP-N-acetyl-alpha-D-glucosamine</name>
        <dbReference type="ChEBI" id="CHEBI:57705"/>
    </ligand>
</feature>
<feature type="binding site" evidence="1">
    <location>
        <begin position="264"/>
        <end position="269"/>
    </location>
    <ligand>
        <name>UDP-N-acetyl-alpha-D-glucosamine</name>
        <dbReference type="ChEBI" id="CHEBI:57705"/>
    </ligand>
</feature>
<feature type="binding site" evidence="1">
    <location>
        <position position="290"/>
    </location>
    <ligand>
        <name>UDP-N-acetyl-alpha-D-glucosamine</name>
        <dbReference type="ChEBI" id="CHEBI:57705"/>
    </ligand>
</feature>
<accession>A5W8Q0</accession>
<dbReference type="EC" id="2.4.1.227" evidence="1"/>
<dbReference type="EMBL" id="CP000712">
    <property type="protein sequence ID" value="ABQ80510.1"/>
    <property type="molecule type" value="Genomic_DNA"/>
</dbReference>
<dbReference type="SMR" id="A5W8Q0"/>
<dbReference type="CAZy" id="GT28">
    <property type="family name" value="Glycosyltransferase Family 28"/>
</dbReference>
<dbReference type="KEGG" id="ppf:Pput_4387"/>
<dbReference type="eggNOG" id="COG0707">
    <property type="taxonomic scope" value="Bacteria"/>
</dbReference>
<dbReference type="HOGENOM" id="CLU_037404_2_0_6"/>
<dbReference type="UniPathway" id="UPA00219"/>
<dbReference type="GO" id="GO:0005886">
    <property type="term" value="C:plasma membrane"/>
    <property type="evidence" value="ECO:0007669"/>
    <property type="project" value="UniProtKB-SubCell"/>
</dbReference>
<dbReference type="GO" id="GO:0051991">
    <property type="term" value="F:UDP-N-acetyl-D-glucosamine:N-acetylmuramoyl-L-alanyl-D-glutamyl-meso-2,6-diaminopimelyl-D-alanyl-D-alanine-diphosphoundecaprenol 4-beta-N-acetylglucosaminlytransferase activity"/>
    <property type="evidence" value="ECO:0007669"/>
    <property type="project" value="RHEA"/>
</dbReference>
<dbReference type="GO" id="GO:0050511">
    <property type="term" value="F:undecaprenyldiphospho-muramoylpentapeptide beta-N-acetylglucosaminyltransferase activity"/>
    <property type="evidence" value="ECO:0007669"/>
    <property type="project" value="UniProtKB-UniRule"/>
</dbReference>
<dbReference type="GO" id="GO:0005975">
    <property type="term" value="P:carbohydrate metabolic process"/>
    <property type="evidence" value="ECO:0007669"/>
    <property type="project" value="InterPro"/>
</dbReference>
<dbReference type="GO" id="GO:0051301">
    <property type="term" value="P:cell division"/>
    <property type="evidence" value="ECO:0007669"/>
    <property type="project" value="UniProtKB-KW"/>
</dbReference>
<dbReference type="GO" id="GO:0071555">
    <property type="term" value="P:cell wall organization"/>
    <property type="evidence" value="ECO:0007669"/>
    <property type="project" value="UniProtKB-KW"/>
</dbReference>
<dbReference type="GO" id="GO:0030259">
    <property type="term" value="P:lipid glycosylation"/>
    <property type="evidence" value="ECO:0007669"/>
    <property type="project" value="UniProtKB-UniRule"/>
</dbReference>
<dbReference type="GO" id="GO:0009252">
    <property type="term" value="P:peptidoglycan biosynthetic process"/>
    <property type="evidence" value="ECO:0007669"/>
    <property type="project" value="UniProtKB-UniRule"/>
</dbReference>
<dbReference type="GO" id="GO:0008360">
    <property type="term" value="P:regulation of cell shape"/>
    <property type="evidence" value="ECO:0007669"/>
    <property type="project" value="UniProtKB-KW"/>
</dbReference>
<dbReference type="CDD" id="cd03785">
    <property type="entry name" value="GT28_MurG"/>
    <property type="match status" value="1"/>
</dbReference>
<dbReference type="Gene3D" id="3.40.50.2000">
    <property type="entry name" value="Glycogen Phosphorylase B"/>
    <property type="match status" value="2"/>
</dbReference>
<dbReference type="HAMAP" id="MF_00033">
    <property type="entry name" value="MurG"/>
    <property type="match status" value="1"/>
</dbReference>
<dbReference type="InterPro" id="IPR006009">
    <property type="entry name" value="GlcNAc_MurG"/>
</dbReference>
<dbReference type="InterPro" id="IPR007235">
    <property type="entry name" value="Glyco_trans_28_C"/>
</dbReference>
<dbReference type="InterPro" id="IPR004276">
    <property type="entry name" value="GlycoTrans_28_N"/>
</dbReference>
<dbReference type="NCBIfam" id="TIGR01133">
    <property type="entry name" value="murG"/>
    <property type="match status" value="1"/>
</dbReference>
<dbReference type="PANTHER" id="PTHR21015:SF22">
    <property type="entry name" value="GLYCOSYLTRANSFERASE"/>
    <property type="match status" value="1"/>
</dbReference>
<dbReference type="PANTHER" id="PTHR21015">
    <property type="entry name" value="UDP-N-ACETYLGLUCOSAMINE--N-ACETYLMURAMYL-(PENTAPEPTIDE) PYROPHOSPHORYL-UNDECAPRENOL N-ACETYLGLUCOSAMINE TRANSFERASE 1"/>
    <property type="match status" value="1"/>
</dbReference>
<dbReference type="Pfam" id="PF04101">
    <property type="entry name" value="Glyco_tran_28_C"/>
    <property type="match status" value="1"/>
</dbReference>
<dbReference type="Pfam" id="PF03033">
    <property type="entry name" value="Glyco_transf_28"/>
    <property type="match status" value="1"/>
</dbReference>
<dbReference type="SUPFAM" id="SSF53756">
    <property type="entry name" value="UDP-Glycosyltransferase/glycogen phosphorylase"/>
    <property type="match status" value="1"/>
</dbReference>
<name>MURG_PSEP1</name>